<sequence>MFDVLMYLFETYIHTEAELRVDQDKLEQDLTDAGFDREDIYNALLWLEKLADYQEGLAEPMQLASDPLSMRIYTPEECERLDASCRGFLLFLEQIQVLNLETREMVIERVLALDTAEFDLEDLKWVILMVLFNIPGCENAYQQMEELLFEVNEGMLH</sequence>
<name>SMG_ECO24</name>
<protein>
    <recommendedName>
        <fullName evidence="1">Protein Smg</fullName>
    </recommendedName>
</protein>
<accession>A7ZSH3</accession>
<organism>
    <name type="scientific">Escherichia coli O139:H28 (strain E24377A / ETEC)</name>
    <dbReference type="NCBI Taxonomy" id="331111"/>
    <lineage>
        <taxon>Bacteria</taxon>
        <taxon>Pseudomonadati</taxon>
        <taxon>Pseudomonadota</taxon>
        <taxon>Gammaproteobacteria</taxon>
        <taxon>Enterobacterales</taxon>
        <taxon>Enterobacteriaceae</taxon>
        <taxon>Escherichia</taxon>
    </lineage>
</organism>
<feature type="chain" id="PRO_1000061240" description="Protein Smg">
    <location>
        <begin position="1"/>
        <end position="157"/>
    </location>
</feature>
<evidence type="ECO:0000255" key="1">
    <source>
        <dbReference type="HAMAP-Rule" id="MF_00598"/>
    </source>
</evidence>
<dbReference type="EMBL" id="CP000800">
    <property type="protein sequence ID" value="ABV17911.1"/>
    <property type="molecule type" value="Genomic_DNA"/>
</dbReference>
<dbReference type="RefSeq" id="WP_000460672.1">
    <property type="nucleotide sequence ID" value="NC_009801.1"/>
</dbReference>
<dbReference type="SMR" id="A7ZSH3"/>
<dbReference type="GeneID" id="86948148"/>
<dbReference type="KEGG" id="ecw:EcE24377A_3767"/>
<dbReference type="HOGENOM" id="CLU_133242_0_0_6"/>
<dbReference type="Proteomes" id="UP000001122">
    <property type="component" value="Chromosome"/>
</dbReference>
<dbReference type="HAMAP" id="MF_00598">
    <property type="entry name" value="Smg"/>
    <property type="match status" value="1"/>
</dbReference>
<dbReference type="InterPro" id="IPR007456">
    <property type="entry name" value="Smg"/>
</dbReference>
<dbReference type="NCBIfam" id="NF002897">
    <property type="entry name" value="PRK03430.1"/>
    <property type="match status" value="1"/>
</dbReference>
<dbReference type="PANTHER" id="PTHR38692">
    <property type="entry name" value="PROTEIN SMG"/>
    <property type="match status" value="1"/>
</dbReference>
<dbReference type="PANTHER" id="PTHR38692:SF1">
    <property type="entry name" value="PROTEIN SMG"/>
    <property type="match status" value="1"/>
</dbReference>
<dbReference type="Pfam" id="PF04361">
    <property type="entry name" value="DUF494"/>
    <property type="match status" value="1"/>
</dbReference>
<proteinExistence type="inferred from homology"/>
<keyword id="KW-1185">Reference proteome</keyword>
<comment type="similarity">
    <text evidence="1">Belongs to the Smg family.</text>
</comment>
<reference key="1">
    <citation type="journal article" date="2008" name="J. Bacteriol.">
        <title>The pangenome structure of Escherichia coli: comparative genomic analysis of E. coli commensal and pathogenic isolates.</title>
        <authorList>
            <person name="Rasko D.A."/>
            <person name="Rosovitz M.J."/>
            <person name="Myers G.S.A."/>
            <person name="Mongodin E.F."/>
            <person name="Fricke W.F."/>
            <person name="Gajer P."/>
            <person name="Crabtree J."/>
            <person name="Sebaihia M."/>
            <person name="Thomson N.R."/>
            <person name="Chaudhuri R."/>
            <person name="Henderson I.R."/>
            <person name="Sperandio V."/>
            <person name="Ravel J."/>
        </authorList>
    </citation>
    <scope>NUCLEOTIDE SEQUENCE [LARGE SCALE GENOMIC DNA]</scope>
    <source>
        <strain>E24377A / ETEC</strain>
    </source>
</reference>
<gene>
    <name evidence="1" type="primary">smg</name>
    <name type="ordered locus">EcE24377A_3767</name>
</gene>